<accession>Q7MSH1</accession>
<proteinExistence type="inferred from homology"/>
<reference key="1">
    <citation type="journal article" date="2003" name="Proc. Natl. Acad. Sci. U.S.A.">
        <title>Complete genome sequence and analysis of Wolinella succinogenes.</title>
        <authorList>
            <person name="Baar C."/>
            <person name="Eppinger M."/>
            <person name="Raddatz G."/>
            <person name="Simon J."/>
            <person name="Lanz C."/>
            <person name="Klimmek O."/>
            <person name="Nandakumar R."/>
            <person name="Gross R."/>
            <person name="Rosinus A."/>
            <person name="Keller H."/>
            <person name="Jagtap P."/>
            <person name="Linke B."/>
            <person name="Meyer F."/>
            <person name="Lederer H."/>
            <person name="Schuster S.C."/>
        </authorList>
    </citation>
    <scope>NUCLEOTIDE SEQUENCE [LARGE SCALE GENOMIC DNA]</scope>
    <source>
        <strain>ATCC 29543 / DSM 1740 / CCUG 13145 / JCM 31913 / LMG 7466 / NCTC 11488 / FDC 602W</strain>
    </source>
</reference>
<keyword id="KW-1185">Reference proteome</keyword>
<keyword id="KW-0687">Ribonucleoprotein</keyword>
<keyword id="KW-0689">Ribosomal protein</keyword>
<keyword id="KW-0694">RNA-binding</keyword>
<keyword id="KW-0699">rRNA-binding</keyword>
<comment type="function">
    <text evidence="1">Binds the 23S rRNA.</text>
</comment>
<comment type="subunit">
    <text evidence="1">Part of the 50S ribosomal subunit.</text>
</comment>
<comment type="similarity">
    <text evidence="1">Belongs to the bacterial ribosomal protein bL31 family. Type A subfamily.</text>
</comment>
<dbReference type="EMBL" id="BX571658">
    <property type="protein sequence ID" value="CAE09586.1"/>
    <property type="molecule type" value="Genomic_DNA"/>
</dbReference>
<dbReference type="RefSeq" id="WP_011138386.1">
    <property type="nucleotide sequence ID" value="NC_005090.1"/>
</dbReference>
<dbReference type="SMR" id="Q7MSH1"/>
<dbReference type="STRING" id="273121.WS0444"/>
<dbReference type="KEGG" id="wsu:WS0444"/>
<dbReference type="eggNOG" id="COG0254">
    <property type="taxonomic scope" value="Bacteria"/>
</dbReference>
<dbReference type="HOGENOM" id="CLU_114306_4_0_7"/>
<dbReference type="Proteomes" id="UP000000422">
    <property type="component" value="Chromosome"/>
</dbReference>
<dbReference type="GO" id="GO:1990904">
    <property type="term" value="C:ribonucleoprotein complex"/>
    <property type="evidence" value="ECO:0007669"/>
    <property type="project" value="UniProtKB-KW"/>
</dbReference>
<dbReference type="GO" id="GO:0005840">
    <property type="term" value="C:ribosome"/>
    <property type="evidence" value="ECO:0007669"/>
    <property type="project" value="UniProtKB-KW"/>
</dbReference>
<dbReference type="GO" id="GO:0019843">
    <property type="term" value="F:rRNA binding"/>
    <property type="evidence" value="ECO:0007669"/>
    <property type="project" value="UniProtKB-KW"/>
</dbReference>
<dbReference type="GO" id="GO:0003735">
    <property type="term" value="F:structural constituent of ribosome"/>
    <property type="evidence" value="ECO:0007669"/>
    <property type="project" value="InterPro"/>
</dbReference>
<dbReference type="GO" id="GO:0006412">
    <property type="term" value="P:translation"/>
    <property type="evidence" value="ECO:0007669"/>
    <property type="project" value="UniProtKB-UniRule"/>
</dbReference>
<dbReference type="Gene3D" id="4.10.830.30">
    <property type="entry name" value="Ribosomal protein L31"/>
    <property type="match status" value="1"/>
</dbReference>
<dbReference type="HAMAP" id="MF_00501">
    <property type="entry name" value="Ribosomal_bL31_1"/>
    <property type="match status" value="1"/>
</dbReference>
<dbReference type="InterPro" id="IPR034704">
    <property type="entry name" value="Ribosomal_bL28/bL31-like_sf"/>
</dbReference>
<dbReference type="InterPro" id="IPR002150">
    <property type="entry name" value="Ribosomal_bL31"/>
</dbReference>
<dbReference type="InterPro" id="IPR027491">
    <property type="entry name" value="Ribosomal_bL31_A"/>
</dbReference>
<dbReference type="InterPro" id="IPR042105">
    <property type="entry name" value="Ribosomal_bL31_sf"/>
</dbReference>
<dbReference type="NCBIfam" id="TIGR00105">
    <property type="entry name" value="L31"/>
    <property type="match status" value="1"/>
</dbReference>
<dbReference type="NCBIfam" id="NF000612">
    <property type="entry name" value="PRK00019.1"/>
    <property type="match status" value="1"/>
</dbReference>
<dbReference type="NCBIfam" id="NF001809">
    <property type="entry name" value="PRK00528.1"/>
    <property type="match status" value="1"/>
</dbReference>
<dbReference type="PANTHER" id="PTHR33280">
    <property type="entry name" value="50S RIBOSOMAL PROTEIN L31, CHLOROPLASTIC"/>
    <property type="match status" value="1"/>
</dbReference>
<dbReference type="PANTHER" id="PTHR33280:SF6">
    <property type="entry name" value="LARGE RIBOSOMAL SUBUNIT PROTEIN BL31A"/>
    <property type="match status" value="1"/>
</dbReference>
<dbReference type="Pfam" id="PF01197">
    <property type="entry name" value="Ribosomal_L31"/>
    <property type="match status" value="1"/>
</dbReference>
<dbReference type="PRINTS" id="PR01249">
    <property type="entry name" value="RIBOSOMALL31"/>
</dbReference>
<dbReference type="SUPFAM" id="SSF143800">
    <property type="entry name" value="L28p-like"/>
    <property type="match status" value="1"/>
</dbReference>
<dbReference type="PROSITE" id="PS01143">
    <property type="entry name" value="RIBOSOMAL_L31"/>
    <property type="match status" value="1"/>
</dbReference>
<evidence type="ECO:0000255" key="1">
    <source>
        <dbReference type="HAMAP-Rule" id="MF_00501"/>
    </source>
</evidence>
<evidence type="ECO:0000305" key="2"/>
<feature type="chain" id="PRO_0000173182" description="Large ribosomal subunit protein bL31">
    <location>
        <begin position="1"/>
        <end position="67"/>
    </location>
</feature>
<name>RL31_WOLSU</name>
<gene>
    <name evidence="1" type="primary">rpmE</name>
    <name type="ordered locus">WS0444</name>
</gene>
<organism>
    <name type="scientific">Wolinella succinogenes (strain ATCC 29543 / DSM 1740 / CCUG 13145 / JCM 31913 / LMG 7466 / NCTC 11488 / FDC 602W)</name>
    <name type="common">Vibrio succinogenes</name>
    <dbReference type="NCBI Taxonomy" id="273121"/>
    <lineage>
        <taxon>Bacteria</taxon>
        <taxon>Pseudomonadati</taxon>
        <taxon>Campylobacterota</taxon>
        <taxon>Epsilonproteobacteria</taxon>
        <taxon>Campylobacterales</taxon>
        <taxon>Helicobacteraceae</taxon>
        <taxon>Wolinella</taxon>
    </lineage>
</organism>
<protein>
    <recommendedName>
        <fullName evidence="1">Large ribosomal subunit protein bL31</fullName>
    </recommendedName>
    <alternativeName>
        <fullName evidence="2">50S ribosomal protein L31</fullName>
    </alternativeName>
</protein>
<sequence length="67" mass="7643">MKKGIHPNYVPCKVTCVTSGKEFEVLSTKPELRIDISSFCHPFYTGSDKVVDTAGRVEKFKQKYNMK</sequence>